<comment type="function">
    <text evidence="1">DNA-dependent RNA polymerase catalyzes the transcription of DNA into RNA using the four ribonucleoside triphosphates as substrates.</text>
</comment>
<comment type="catalytic activity">
    <reaction evidence="1">
        <text>RNA(n) + a ribonucleoside 5'-triphosphate = RNA(n+1) + diphosphate</text>
        <dbReference type="Rhea" id="RHEA:21248"/>
        <dbReference type="Rhea" id="RHEA-COMP:14527"/>
        <dbReference type="Rhea" id="RHEA-COMP:17342"/>
        <dbReference type="ChEBI" id="CHEBI:33019"/>
        <dbReference type="ChEBI" id="CHEBI:61557"/>
        <dbReference type="ChEBI" id="CHEBI:140395"/>
        <dbReference type="EC" id="2.7.7.6"/>
    </reaction>
</comment>
<comment type="subunit">
    <text evidence="1">Homodimer. The RNAP catalytic core consists of 2 alpha, 1 beta, 1 beta' and 1 omega subunit. When a sigma factor is associated with the core the holoenzyme is formed, which can initiate transcription.</text>
</comment>
<comment type="domain">
    <text evidence="1">The N-terminal domain is essential for RNAP assembly and basal transcription, whereas the C-terminal domain is involved in interaction with transcriptional regulators and with upstream promoter elements.</text>
</comment>
<comment type="similarity">
    <text evidence="1">Belongs to the RNA polymerase alpha chain family.</text>
</comment>
<protein>
    <recommendedName>
        <fullName evidence="1">DNA-directed RNA polymerase subunit alpha</fullName>
        <shortName evidence="1">RNAP subunit alpha</shortName>
        <ecNumber evidence="1">2.7.7.6</ecNumber>
    </recommendedName>
    <alternativeName>
        <fullName evidence="1">RNA polymerase subunit alpha</fullName>
    </alternativeName>
    <alternativeName>
        <fullName evidence="1">Transcriptase subunit alpha</fullName>
    </alternativeName>
</protein>
<evidence type="ECO:0000255" key="1">
    <source>
        <dbReference type="HAMAP-Rule" id="MF_00059"/>
    </source>
</evidence>
<reference key="1">
    <citation type="journal article" date="2009" name="Environ. Microbiol.">
        <title>The genome of Polaromonas naphthalenivorans strain CJ2, isolated from coal tar-contaminated sediment, reveals physiological and metabolic versatility and evolution through extensive horizontal gene transfer.</title>
        <authorList>
            <person name="Yagi J.M."/>
            <person name="Sims D."/>
            <person name="Brettin T."/>
            <person name="Bruce D."/>
            <person name="Madsen E.L."/>
        </authorList>
    </citation>
    <scope>NUCLEOTIDE SEQUENCE [LARGE SCALE GENOMIC DNA]</scope>
    <source>
        <strain>CJ2</strain>
    </source>
</reference>
<dbReference type="EC" id="2.7.7.6" evidence="1"/>
<dbReference type="EMBL" id="CP000529">
    <property type="protein sequence ID" value="ABM35668.1"/>
    <property type="molecule type" value="Genomic_DNA"/>
</dbReference>
<dbReference type="RefSeq" id="WP_011799773.1">
    <property type="nucleotide sequence ID" value="NC_008781.1"/>
</dbReference>
<dbReference type="SMR" id="A1VJ40"/>
<dbReference type="STRING" id="365044.Pnap_0345"/>
<dbReference type="KEGG" id="pna:Pnap_0345"/>
<dbReference type="eggNOG" id="COG0202">
    <property type="taxonomic scope" value="Bacteria"/>
</dbReference>
<dbReference type="HOGENOM" id="CLU_053084_0_0_4"/>
<dbReference type="OrthoDB" id="9805706at2"/>
<dbReference type="Proteomes" id="UP000000644">
    <property type="component" value="Chromosome"/>
</dbReference>
<dbReference type="GO" id="GO:0005737">
    <property type="term" value="C:cytoplasm"/>
    <property type="evidence" value="ECO:0007669"/>
    <property type="project" value="UniProtKB-ARBA"/>
</dbReference>
<dbReference type="GO" id="GO:0000428">
    <property type="term" value="C:DNA-directed RNA polymerase complex"/>
    <property type="evidence" value="ECO:0007669"/>
    <property type="project" value="UniProtKB-KW"/>
</dbReference>
<dbReference type="GO" id="GO:0003677">
    <property type="term" value="F:DNA binding"/>
    <property type="evidence" value="ECO:0007669"/>
    <property type="project" value="UniProtKB-UniRule"/>
</dbReference>
<dbReference type="GO" id="GO:0003899">
    <property type="term" value="F:DNA-directed RNA polymerase activity"/>
    <property type="evidence" value="ECO:0007669"/>
    <property type="project" value="UniProtKB-UniRule"/>
</dbReference>
<dbReference type="GO" id="GO:0046983">
    <property type="term" value="F:protein dimerization activity"/>
    <property type="evidence" value="ECO:0007669"/>
    <property type="project" value="InterPro"/>
</dbReference>
<dbReference type="GO" id="GO:0006351">
    <property type="term" value="P:DNA-templated transcription"/>
    <property type="evidence" value="ECO:0007669"/>
    <property type="project" value="UniProtKB-UniRule"/>
</dbReference>
<dbReference type="CDD" id="cd06928">
    <property type="entry name" value="RNAP_alpha_NTD"/>
    <property type="match status" value="1"/>
</dbReference>
<dbReference type="FunFam" id="1.10.150.20:FF:000001">
    <property type="entry name" value="DNA-directed RNA polymerase subunit alpha"/>
    <property type="match status" value="1"/>
</dbReference>
<dbReference type="FunFam" id="2.170.120.12:FF:000001">
    <property type="entry name" value="DNA-directed RNA polymerase subunit alpha"/>
    <property type="match status" value="1"/>
</dbReference>
<dbReference type="Gene3D" id="1.10.150.20">
    <property type="entry name" value="5' to 3' exonuclease, C-terminal subdomain"/>
    <property type="match status" value="1"/>
</dbReference>
<dbReference type="Gene3D" id="2.170.120.12">
    <property type="entry name" value="DNA-directed RNA polymerase, insert domain"/>
    <property type="match status" value="1"/>
</dbReference>
<dbReference type="Gene3D" id="3.30.1360.10">
    <property type="entry name" value="RNA polymerase, RBP11-like subunit"/>
    <property type="match status" value="1"/>
</dbReference>
<dbReference type="HAMAP" id="MF_00059">
    <property type="entry name" value="RNApol_bact_RpoA"/>
    <property type="match status" value="1"/>
</dbReference>
<dbReference type="InterPro" id="IPR011262">
    <property type="entry name" value="DNA-dir_RNA_pol_insert"/>
</dbReference>
<dbReference type="InterPro" id="IPR011263">
    <property type="entry name" value="DNA-dir_RNA_pol_RpoA/D/Rpb3"/>
</dbReference>
<dbReference type="InterPro" id="IPR011773">
    <property type="entry name" value="DNA-dir_RpoA"/>
</dbReference>
<dbReference type="InterPro" id="IPR036603">
    <property type="entry name" value="RBP11-like"/>
</dbReference>
<dbReference type="InterPro" id="IPR011260">
    <property type="entry name" value="RNAP_asu_C"/>
</dbReference>
<dbReference type="InterPro" id="IPR036643">
    <property type="entry name" value="RNApol_insert_sf"/>
</dbReference>
<dbReference type="NCBIfam" id="NF003513">
    <property type="entry name" value="PRK05182.1-2"/>
    <property type="match status" value="1"/>
</dbReference>
<dbReference type="NCBIfam" id="NF003519">
    <property type="entry name" value="PRK05182.2-5"/>
    <property type="match status" value="1"/>
</dbReference>
<dbReference type="NCBIfam" id="TIGR02027">
    <property type="entry name" value="rpoA"/>
    <property type="match status" value="1"/>
</dbReference>
<dbReference type="Pfam" id="PF01000">
    <property type="entry name" value="RNA_pol_A_bac"/>
    <property type="match status" value="1"/>
</dbReference>
<dbReference type="Pfam" id="PF03118">
    <property type="entry name" value="RNA_pol_A_CTD"/>
    <property type="match status" value="1"/>
</dbReference>
<dbReference type="Pfam" id="PF01193">
    <property type="entry name" value="RNA_pol_L"/>
    <property type="match status" value="1"/>
</dbReference>
<dbReference type="SMART" id="SM00662">
    <property type="entry name" value="RPOLD"/>
    <property type="match status" value="1"/>
</dbReference>
<dbReference type="SUPFAM" id="SSF47789">
    <property type="entry name" value="C-terminal domain of RNA polymerase alpha subunit"/>
    <property type="match status" value="1"/>
</dbReference>
<dbReference type="SUPFAM" id="SSF56553">
    <property type="entry name" value="Insert subdomain of RNA polymerase alpha subunit"/>
    <property type="match status" value="1"/>
</dbReference>
<dbReference type="SUPFAM" id="SSF55257">
    <property type="entry name" value="RBP11-like subunits of RNA polymerase"/>
    <property type="match status" value="1"/>
</dbReference>
<name>RPOA_POLNA</name>
<sequence length="330" mass="36305">MQTNLLKPKTINVEQLGANRAKVTLEPFERGYGHTLGNALRRVLLSSMVGHAATEVTIAGVLHEYSSIDGVQEDVVNILLNLKGVVFKLHNRDEVTLSLRKDGEGPITAADIQTPHDVEIVNPDHVIMNLSHGGKIDMQIKVENGRGYVPGNVRRYGDESPKSIGRIVLDASFSPVKRVSYTVESARVEQRTDLDKLVLEIETNGAVTAEDAVRASAKILVEQLAVFAQLEGNELGAIINDPAPRSSQQFDPILLRPVDELELTVRSANCLKAENIYYIGDLIQRTENELLKTPNLGRKSLNEIKEVLASRGLTLGMRLESWPPAGLDKR</sequence>
<gene>
    <name evidence="1" type="primary">rpoA</name>
    <name type="ordered locus">Pnap_0345</name>
</gene>
<feature type="chain" id="PRO_0000296849" description="DNA-directed RNA polymerase subunit alpha">
    <location>
        <begin position="1"/>
        <end position="330"/>
    </location>
</feature>
<feature type="region of interest" description="Alpha N-terminal domain (alpha-NTD)" evidence="1">
    <location>
        <begin position="1"/>
        <end position="231"/>
    </location>
</feature>
<feature type="region of interest" description="Alpha C-terminal domain (alpha-CTD)" evidence="1">
    <location>
        <begin position="250"/>
        <end position="330"/>
    </location>
</feature>
<organism>
    <name type="scientific">Polaromonas naphthalenivorans (strain CJ2)</name>
    <dbReference type="NCBI Taxonomy" id="365044"/>
    <lineage>
        <taxon>Bacteria</taxon>
        <taxon>Pseudomonadati</taxon>
        <taxon>Pseudomonadota</taxon>
        <taxon>Betaproteobacteria</taxon>
        <taxon>Burkholderiales</taxon>
        <taxon>Comamonadaceae</taxon>
        <taxon>Polaromonas</taxon>
    </lineage>
</organism>
<proteinExistence type="inferred from homology"/>
<accession>A1VJ40</accession>
<keyword id="KW-0240">DNA-directed RNA polymerase</keyword>
<keyword id="KW-0548">Nucleotidyltransferase</keyword>
<keyword id="KW-1185">Reference proteome</keyword>
<keyword id="KW-0804">Transcription</keyword>
<keyword id="KW-0808">Transferase</keyword>